<comment type="function">
    <text evidence="1">Catalyzes the methylthiolation of N6-(dimethylallyl)adenosine (i(6)A), leading to the formation of 2-methylthio-N6-(dimethylallyl)adenosine (ms(2)i(6)A) at position 37 in tRNAs that read codons beginning with uridine.</text>
</comment>
<comment type="catalytic activity">
    <reaction evidence="1">
        <text>N(6)-dimethylallyladenosine(37) in tRNA + (sulfur carrier)-SH + AH2 + 2 S-adenosyl-L-methionine = 2-methylsulfanyl-N(6)-dimethylallyladenosine(37) in tRNA + (sulfur carrier)-H + 5'-deoxyadenosine + L-methionine + A + S-adenosyl-L-homocysteine + 2 H(+)</text>
        <dbReference type="Rhea" id="RHEA:37067"/>
        <dbReference type="Rhea" id="RHEA-COMP:10375"/>
        <dbReference type="Rhea" id="RHEA-COMP:10376"/>
        <dbReference type="Rhea" id="RHEA-COMP:14737"/>
        <dbReference type="Rhea" id="RHEA-COMP:14739"/>
        <dbReference type="ChEBI" id="CHEBI:13193"/>
        <dbReference type="ChEBI" id="CHEBI:15378"/>
        <dbReference type="ChEBI" id="CHEBI:17319"/>
        <dbReference type="ChEBI" id="CHEBI:17499"/>
        <dbReference type="ChEBI" id="CHEBI:29917"/>
        <dbReference type="ChEBI" id="CHEBI:57844"/>
        <dbReference type="ChEBI" id="CHEBI:57856"/>
        <dbReference type="ChEBI" id="CHEBI:59789"/>
        <dbReference type="ChEBI" id="CHEBI:64428"/>
        <dbReference type="ChEBI" id="CHEBI:74415"/>
        <dbReference type="ChEBI" id="CHEBI:74417"/>
        <dbReference type="EC" id="2.8.4.3"/>
    </reaction>
</comment>
<comment type="cofactor">
    <cofactor evidence="1">
        <name>[4Fe-4S] cluster</name>
        <dbReference type="ChEBI" id="CHEBI:49883"/>
    </cofactor>
    <text evidence="1">Binds 2 [4Fe-4S] clusters. One cluster is coordinated with 3 cysteines and an exchangeable S-adenosyl-L-methionine.</text>
</comment>
<comment type="subunit">
    <text evidence="1">Monomer.</text>
</comment>
<comment type="subcellular location">
    <subcellularLocation>
        <location evidence="1">Cytoplasm</location>
    </subcellularLocation>
</comment>
<comment type="similarity">
    <text evidence="1">Belongs to the methylthiotransferase family. MiaB subfamily.</text>
</comment>
<keyword id="KW-0004">4Fe-4S</keyword>
<keyword id="KW-0963">Cytoplasm</keyword>
<keyword id="KW-0408">Iron</keyword>
<keyword id="KW-0411">Iron-sulfur</keyword>
<keyword id="KW-0479">Metal-binding</keyword>
<keyword id="KW-1185">Reference proteome</keyword>
<keyword id="KW-0949">S-adenosyl-L-methionine</keyword>
<keyword id="KW-0808">Transferase</keyword>
<keyword id="KW-0819">tRNA processing</keyword>
<reference key="1">
    <citation type="journal article" date="2008" name="J. Biotechnol.">
        <title>The lifestyle of Corynebacterium urealyticum derived from its complete genome sequence established by pyrosequencing.</title>
        <authorList>
            <person name="Tauch A."/>
            <person name="Trost E."/>
            <person name="Tilker A."/>
            <person name="Ludewig U."/>
            <person name="Schneiker S."/>
            <person name="Goesmann A."/>
            <person name="Arnold W."/>
            <person name="Bekel T."/>
            <person name="Brinkrolf K."/>
            <person name="Brune I."/>
            <person name="Goetker S."/>
            <person name="Kalinowski J."/>
            <person name="Kamp P.-B."/>
            <person name="Lobo F.P."/>
            <person name="Viehoever P."/>
            <person name="Weisshaar B."/>
            <person name="Soriano F."/>
            <person name="Droege M."/>
            <person name="Puehler A."/>
        </authorList>
    </citation>
    <scope>NUCLEOTIDE SEQUENCE [LARGE SCALE GENOMIC DNA]</scope>
    <source>
        <strain>ATCC 43042 / DSM 7109</strain>
    </source>
</reference>
<name>MIAB_CORU7</name>
<dbReference type="EC" id="2.8.4.3" evidence="1"/>
<dbReference type="EMBL" id="AM942444">
    <property type="protein sequence ID" value="CAQ04836.1"/>
    <property type="molecule type" value="Genomic_DNA"/>
</dbReference>
<dbReference type="RefSeq" id="WP_012360125.1">
    <property type="nucleotide sequence ID" value="NC_010545.1"/>
</dbReference>
<dbReference type="SMR" id="B1VDD8"/>
<dbReference type="STRING" id="504474.cu0876"/>
<dbReference type="GeneID" id="60603652"/>
<dbReference type="KEGG" id="cur:cu0876"/>
<dbReference type="eggNOG" id="COG0621">
    <property type="taxonomic scope" value="Bacteria"/>
</dbReference>
<dbReference type="HOGENOM" id="CLU_018697_2_2_11"/>
<dbReference type="Proteomes" id="UP000001727">
    <property type="component" value="Chromosome"/>
</dbReference>
<dbReference type="GO" id="GO:0005829">
    <property type="term" value="C:cytosol"/>
    <property type="evidence" value="ECO:0007669"/>
    <property type="project" value="TreeGrafter"/>
</dbReference>
<dbReference type="GO" id="GO:0051539">
    <property type="term" value="F:4 iron, 4 sulfur cluster binding"/>
    <property type="evidence" value="ECO:0007669"/>
    <property type="project" value="UniProtKB-UniRule"/>
</dbReference>
<dbReference type="GO" id="GO:0046872">
    <property type="term" value="F:metal ion binding"/>
    <property type="evidence" value="ECO:0007669"/>
    <property type="project" value="UniProtKB-KW"/>
</dbReference>
<dbReference type="GO" id="GO:0035597">
    <property type="term" value="F:N6-isopentenyladenosine methylthiotransferase activity"/>
    <property type="evidence" value="ECO:0007669"/>
    <property type="project" value="TreeGrafter"/>
</dbReference>
<dbReference type="CDD" id="cd01335">
    <property type="entry name" value="Radical_SAM"/>
    <property type="match status" value="1"/>
</dbReference>
<dbReference type="FunFam" id="3.40.50.12160:FF:000003">
    <property type="entry name" value="CDK5 regulatory subunit-associated protein 1"/>
    <property type="match status" value="1"/>
</dbReference>
<dbReference type="FunFam" id="3.80.30.20:FF:000001">
    <property type="entry name" value="tRNA-2-methylthio-N(6)-dimethylallyladenosine synthase 2"/>
    <property type="match status" value="1"/>
</dbReference>
<dbReference type="Gene3D" id="3.40.50.12160">
    <property type="entry name" value="Methylthiotransferase, N-terminal domain"/>
    <property type="match status" value="1"/>
</dbReference>
<dbReference type="Gene3D" id="3.80.30.20">
    <property type="entry name" value="tm_1862 like domain"/>
    <property type="match status" value="1"/>
</dbReference>
<dbReference type="HAMAP" id="MF_01864">
    <property type="entry name" value="tRNA_metthiotr_MiaB"/>
    <property type="match status" value="1"/>
</dbReference>
<dbReference type="InterPro" id="IPR006638">
    <property type="entry name" value="Elp3/MiaA/NifB-like_rSAM"/>
</dbReference>
<dbReference type="InterPro" id="IPR005839">
    <property type="entry name" value="Methylthiotransferase"/>
</dbReference>
<dbReference type="InterPro" id="IPR020612">
    <property type="entry name" value="Methylthiotransferase_CS"/>
</dbReference>
<dbReference type="InterPro" id="IPR013848">
    <property type="entry name" value="Methylthiotransferase_N"/>
</dbReference>
<dbReference type="InterPro" id="IPR038135">
    <property type="entry name" value="Methylthiotransferase_N_sf"/>
</dbReference>
<dbReference type="InterPro" id="IPR006463">
    <property type="entry name" value="MiaB_methiolase"/>
</dbReference>
<dbReference type="InterPro" id="IPR007197">
    <property type="entry name" value="rSAM"/>
</dbReference>
<dbReference type="InterPro" id="IPR023404">
    <property type="entry name" value="rSAM_horseshoe"/>
</dbReference>
<dbReference type="InterPro" id="IPR002792">
    <property type="entry name" value="TRAM_dom"/>
</dbReference>
<dbReference type="NCBIfam" id="TIGR01574">
    <property type="entry name" value="miaB-methiolase"/>
    <property type="match status" value="1"/>
</dbReference>
<dbReference type="NCBIfam" id="TIGR00089">
    <property type="entry name" value="MiaB/RimO family radical SAM methylthiotransferase"/>
    <property type="match status" value="1"/>
</dbReference>
<dbReference type="PANTHER" id="PTHR43020">
    <property type="entry name" value="CDK5 REGULATORY SUBUNIT-ASSOCIATED PROTEIN 1"/>
    <property type="match status" value="1"/>
</dbReference>
<dbReference type="PANTHER" id="PTHR43020:SF2">
    <property type="entry name" value="MITOCHONDRIAL TRNA METHYLTHIOTRANSFERASE CDK5RAP1"/>
    <property type="match status" value="1"/>
</dbReference>
<dbReference type="Pfam" id="PF04055">
    <property type="entry name" value="Radical_SAM"/>
    <property type="match status" value="1"/>
</dbReference>
<dbReference type="Pfam" id="PF01938">
    <property type="entry name" value="TRAM"/>
    <property type="match status" value="1"/>
</dbReference>
<dbReference type="Pfam" id="PF00919">
    <property type="entry name" value="UPF0004"/>
    <property type="match status" value="1"/>
</dbReference>
<dbReference type="SFLD" id="SFLDF00273">
    <property type="entry name" value="(dimethylallyl)adenosine_tRNA"/>
    <property type="match status" value="1"/>
</dbReference>
<dbReference type="SFLD" id="SFLDG01082">
    <property type="entry name" value="B12-binding_domain_containing"/>
    <property type="match status" value="1"/>
</dbReference>
<dbReference type="SFLD" id="SFLDG01061">
    <property type="entry name" value="methylthiotransferase"/>
    <property type="match status" value="1"/>
</dbReference>
<dbReference type="SMART" id="SM00729">
    <property type="entry name" value="Elp3"/>
    <property type="match status" value="1"/>
</dbReference>
<dbReference type="SUPFAM" id="SSF102114">
    <property type="entry name" value="Radical SAM enzymes"/>
    <property type="match status" value="1"/>
</dbReference>
<dbReference type="PROSITE" id="PS51449">
    <property type="entry name" value="MTTASE_N"/>
    <property type="match status" value="1"/>
</dbReference>
<dbReference type="PROSITE" id="PS01278">
    <property type="entry name" value="MTTASE_RADICAL"/>
    <property type="match status" value="1"/>
</dbReference>
<dbReference type="PROSITE" id="PS51918">
    <property type="entry name" value="RADICAL_SAM"/>
    <property type="match status" value="1"/>
</dbReference>
<dbReference type="PROSITE" id="PS50926">
    <property type="entry name" value="TRAM"/>
    <property type="match status" value="1"/>
</dbReference>
<protein>
    <recommendedName>
        <fullName evidence="1">tRNA-2-methylthio-N(6)-dimethylallyladenosine synthase</fullName>
        <ecNumber evidence="1">2.8.4.3</ecNumber>
    </recommendedName>
    <alternativeName>
        <fullName evidence="1">(Dimethylallyl)adenosine tRNA methylthiotransferase MiaB</fullName>
    </alternativeName>
    <alternativeName>
        <fullName evidence="1">tRNA-i(6)A37 methylthiotransferase</fullName>
    </alternativeName>
</protein>
<feature type="chain" id="PRO_0000374243" description="tRNA-2-methylthio-N(6)-dimethylallyladenosine synthase">
    <location>
        <begin position="1"/>
        <end position="540"/>
    </location>
</feature>
<feature type="domain" description="MTTase N-terminal" evidence="1">
    <location>
        <begin position="41"/>
        <end position="157"/>
    </location>
</feature>
<feature type="domain" description="Radical SAM core" evidence="2">
    <location>
        <begin position="180"/>
        <end position="416"/>
    </location>
</feature>
<feature type="domain" description="TRAM" evidence="1">
    <location>
        <begin position="419"/>
        <end position="486"/>
    </location>
</feature>
<feature type="binding site" evidence="1">
    <location>
        <position position="50"/>
    </location>
    <ligand>
        <name>[4Fe-4S] cluster</name>
        <dbReference type="ChEBI" id="CHEBI:49883"/>
        <label>1</label>
    </ligand>
</feature>
<feature type="binding site" evidence="1">
    <location>
        <position position="86"/>
    </location>
    <ligand>
        <name>[4Fe-4S] cluster</name>
        <dbReference type="ChEBI" id="CHEBI:49883"/>
        <label>1</label>
    </ligand>
</feature>
<feature type="binding site" evidence="1">
    <location>
        <position position="120"/>
    </location>
    <ligand>
        <name>[4Fe-4S] cluster</name>
        <dbReference type="ChEBI" id="CHEBI:49883"/>
        <label>1</label>
    </ligand>
</feature>
<feature type="binding site" evidence="1">
    <location>
        <position position="194"/>
    </location>
    <ligand>
        <name>[4Fe-4S] cluster</name>
        <dbReference type="ChEBI" id="CHEBI:49883"/>
        <label>2</label>
        <note>4Fe-4S-S-AdoMet</note>
    </ligand>
</feature>
<feature type="binding site" evidence="1">
    <location>
        <position position="198"/>
    </location>
    <ligand>
        <name>[4Fe-4S] cluster</name>
        <dbReference type="ChEBI" id="CHEBI:49883"/>
        <label>2</label>
        <note>4Fe-4S-S-AdoMet</note>
    </ligand>
</feature>
<feature type="binding site" evidence="1">
    <location>
        <position position="201"/>
    </location>
    <ligand>
        <name>[4Fe-4S] cluster</name>
        <dbReference type="ChEBI" id="CHEBI:49883"/>
        <label>2</label>
        <note>4Fe-4S-S-AdoMet</note>
    </ligand>
</feature>
<organism>
    <name type="scientific">Corynebacterium urealyticum (strain ATCC 43042 / DSM 7109)</name>
    <dbReference type="NCBI Taxonomy" id="504474"/>
    <lineage>
        <taxon>Bacteria</taxon>
        <taxon>Bacillati</taxon>
        <taxon>Actinomycetota</taxon>
        <taxon>Actinomycetes</taxon>
        <taxon>Mycobacteriales</taxon>
        <taxon>Corynebacteriaceae</taxon>
        <taxon>Corynebacterium</taxon>
    </lineage>
</organism>
<sequence>MCRAVAGVTRFVFTLALGVGSAHVTHAMKKKTSVSEQPEQRTYEVRTFGCQMNVHDSERLSGLLEDSGYQPAANGEEPDVLVFNTCAVRENADNRLYGTLAMVKPMKDRNPGMQIAVGGCMAQKDKDAVVDRAPWVDVVFGTHNIGSLPTLLERSAHNQRAEVEILDSLEEFPSVLPAKRESAYSGWVSVSVGCNNTCTFCIVPSLRGKEQDRRPGEILAEVQALVDQGVQEVTLLGQNVNAYGVNFADEDLPRDRGAFAKLLRACGEIEGLERLRFTSPHPAEFTDDVIDAMAETPNVCPQLHMPLQSGSDRILKEMRRSYRSKKFLGILDKVRERIPHAAITTDIIVGFPGETEEDFQATLDVVEKARFSCAFTFQYSPRPGTPAATMPDQIPKAVVQERYERLIALQERIQAEDNKELVGTTQELLVQETGGRKDAQRHRMSGRARDGRLVHFTPSEDVRPGDIVEVTITDARPFFLIADGPLVNHRLTKAGDMSGAGQTPTTAPIGVSLGVPTIGIKPQADATAAPKNVHEGCGCD</sequence>
<proteinExistence type="inferred from homology"/>
<accession>B1VDD8</accession>
<evidence type="ECO:0000255" key="1">
    <source>
        <dbReference type="HAMAP-Rule" id="MF_01864"/>
    </source>
</evidence>
<evidence type="ECO:0000255" key="2">
    <source>
        <dbReference type="PROSITE-ProRule" id="PRU01266"/>
    </source>
</evidence>
<gene>
    <name evidence="1" type="primary">miaB</name>
    <name type="ordered locus">cu0876</name>
</gene>